<feature type="chain" id="PRO_1000077339" description="1-deoxy-D-xylulose 5-phosphate reductoisomerase">
    <location>
        <begin position="1"/>
        <end position="412"/>
    </location>
</feature>
<feature type="binding site" evidence="1">
    <location>
        <position position="10"/>
    </location>
    <ligand>
        <name>NADPH</name>
        <dbReference type="ChEBI" id="CHEBI:57783"/>
    </ligand>
</feature>
<feature type="binding site" evidence="1">
    <location>
        <position position="11"/>
    </location>
    <ligand>
        <name>NADPH</name>
        <dbReference type="ChEBI" id="CHEBI:57783"/>
    </ligand>
</feature>
<feature type="binding site" evidence="1">
    <location>
        <position position="12"/>
    </location>
    <ligand>
        <name>NADPH</name>
        <dbReference type="ChEBI" id="CHEBI:57783"/>
    </ligand>
</feature>
<feature type="binding site" evidence="1">
    <location>
        <position position="13"/>
    </location>
    <ligand>
        <name>NADPH</name>
        <dbReference type="ChEBI" id="CHEBI:57783"/>
    </ligand>
</feature>
<feature type="binding site" evidence="1">
    <location>
        <position position="36"/>
    </location>
    <ligand>
        <name>NADPH</name>
        <dbReference type="ChEBI" id="CHEBI:57783"/>
    </ligand>
</feature>
<feature type="binding site" evidence="1">
    <location>
        <position position="37"/>
    </location>
    <ligand>
        <name>NADPH</name>
        <dbReference type="ChEBI" id="CHEBI:57783"/>
    </ligand>
</feature>
<feature type="binding site" evidence="1">
    <location>
        <position position="38"/>
    </location>
    <ligand>
        <name>NADPH</name>
        <dbReference type="ChEBI" id="CHEBI:57783"/>
    </ligand>
</feature>
<feature type="binding site" evidence="1">
    <location>
        <position position="130"/>
    </location>
    <ligand>
        <name>NADPH</name>
        <dbReference type="ChEBI" id="CHEBI:57783"/>
    </ligand>
</feature>
<feature type="binding site" evidence="1">
    <location>
        <position position="131"/>
    </location>
    <ligand>
        <name>1-deoxy-D-xylulose 5-phosphate</name>
        <dbReference type="ChEBI" id="CHEBI:57792"/>
    </ligand>
</feature>
<feature type="binding site" evidence="1">
    <location>
        <position position="132"/>
    </location>
    <ligand>
        <name>NADPH</name>
        <dbReference type="ChEBI" id="CHEBI:57783"/>
    </ligand>
</feature>
<feature type="binding site" evidence="1">
    <location>
        <position position="156"/>
    </location>
    <ligand>
        <name>Mn(2+)</name>
        <dbReference type="ChEBI" id="CHEBI:29035"/>
    </ligand>
</feature>
<feature type="binding site" evidence="1">
    <location>
        <position position="157"/>
    </location>
    <ligand>
        <name>1-deoxy-D-xylulose 5-phosphate</name>
        <dbReference type="ChEBI" id="CHEBI:57792"/>
    </ligand>
</feature>
<feature type="binding site" evidence="1">
    <location>
        <position position="158"/>
    </location>
    <ligand>
        <name>1-deoxy-D-xylulose 5-phosphate</name>
        <dbReference type="ChEBI" id="CHEBI:57792"/>
    </ligand>
</feature>
<feature type="binding site" evidence="1">
    <location>
        <position position="158"/>
    </location>
    <ligand>
        <name>Mn(2+)</name>
        <dbReference type="ChEBI" id="CHEBI:29035"/>
    </ligand>
</feature>
<feature type="binding site" evidence="1">
    <location>
        <position position="194"/>
    </location>
    <ligand>
        <name>1-deoxy-D-xylulose 5-phosphate</name>
        <dbReference type="ChEBI" id="CHEBI:57792"/>
    </ligand>
</feature>
<feature type="binding site" evidence="1">
    <location>
        <position position="217"/>
    </location>
    <ligand>
        <name>1-deoxy-D-xylulose 5-phosphate</name>
        <dbReference type="ChEBI" id="CHEBI:57792"/>
    </ligand>
</feature>
<feature type="binding site" evidence="1">
    <location>
        <position position="223"/>
    </location>
    <ligand>
        <name>NADPH</name>
        <dbReference type="ChEBI" id="CHEBI:57783"/>
    </ligand>
</feature>
<feature type="binding site" evidence="1">
    <location>
        <position position="230"/>
    </location>
    <ligand>
        <name>1-deoxy-D-xylulose 5-phosphate</name>
        <dbReference type="ChEBI" id="CHEBI:57792"/>
    </ligand>
</feature>
<feature type="binding site" evidence="1">
    <location>
        <position position="235"/>
    </location>
    <ligand>
        <name>1-deoxy-D-xylulose 5-phosphate</name>
        <dbReference type="ChEBI" id="CHEBI:57792"/>
    </ligand>
</feature>
<feature type="binding site" evidence="1">
    <location>
        <position position="236"/>
    </location>
    <ligand>
        <name>1-deoxy-D-xylulose 5-phosphate</name>
        <dbReference type="ChEBI" id="CHEBI:57792"/>
    </ligand>
</feature>
<feature type="binding site" evidence="1">
    <location>
        <position position="239"/>
    </location>
    <ligand>
        <name>1-deoxy-D-xylulose 5-phosphate</name>
        <dbReference type="ChEBI" id="CHEBI:57792"/>
    </ligand>
</feature>
<feature type="binding site" evidence="1">
    <location>
        <position position="239"/>
    </location>
    <ligand>
        <name>Mn(2+)</name>
        <dbReference type="ChEBI" id="CHEBI:29035"/>
    </ligand>
</feature>
<keyword id="KW-0414">Isoprene biosynthesis</keyword>
<keyword id="KW-0464">Manganese</keyword>
<keyword id="KW-0479">Metal-binding</keyword>
<keyword id="KW-0521">NADP</keyword>
<keyword id="KW-0560">Oxidoreductase</keyword>
<keyword id="KW-1185">Reference proteome</keyword>
<gene>
    <name evidence="1" type="primary">dxr</name>
    <name type="ordered locus">PMN2A_0751</name>
</gene>
<organism>
    <name type="scientific">Prochlorococcus marinus (strain NATL2A)</name>
    <dbReference type="NCBI Taxonomy" id="59920"/>
    <lineage>
        <taxon>Bacteria</taxon>
        <taxon>Bacillati</taxon>
        <taxon>Cyanobacteriota</taxon>
        <taxon>Cyanophyceae</taxon>
        <taxon>Synechococcales</taxon>
        <taxon>Prochlorococcaceae</taxon>
        <taxon>Prochlorococcus</taxon>
    </lineage>
</organism>
<name>DXR_PROMT</name>
<dbReference type="EC" id="1.1.1.267" evidence="1"/>
<dbReference type="EMBL" id="CP000095">
    <property type="protein sequence ID" value="AAZ58242.1"/>
    <property type="molecule type" value="Genomic_DNA"/>
</dbReference>
<dbReference type="RefSeq" id="WP_011294839.1">
    <property type="nucleotide sequence ID" value="NC_007335.2"/>
</dbReference>
<dbReference type="SMR" id="Q46JT6"/>
<dbReference type="STRING" id="59920.PMN2A_0751"/>
<dbReference type="KEGG" id="pmn:PMN2A_0751"/>
<dbReference type="HOGENOM" id="CLU_035714_4_0_3"/>
<dbReference type="OrthoDB" id="9806546at2"/>
<dbReference type="PhylomeDB" id="Q46JT6"/>
<dbReference type="UniPathway" id="UPA00056">
    <property type="reaction ID" value="UER00092"/>
</dbReference>
<dbReference type="Proteomes" id="UP000002535">
    <property type="component" value="Chromosome"/>
</dbReference>
<dbReference type="GO" id="GO:0030604">
    <property type="term" value="F:1-deoxy-D-xylulose-5-phosphate reductoisomerase activity"/>
    <property type="evidence" value="ECO:0007669"/>
    <property type="project" value="UniProtKB-UniRule"/>
</dbReference>
<dbReference type="GO" id="GO:0030145">
    <property type="term" value="F:manganese ion binding"/>
    <property type="evidence" value="ECO:0007669"/>
    <property type="project" value="TreeGrafter"/>
</dbReference>
<dbReference type="GO" id="GO:0070402">
    <property type="term" value="F:NADPH binding"/>
    <property type="evidence" value="ECO:0007669"/>
    <property type="project" value="InterPro"/>
</dbReference>
<dbReference type="GO" id="GO:0051484">
    <property type="term" value="P:isopentenyl diphosphate biosynthetic process, methylerythritol 4-phosphate pathway involved in terpenoid biosynthetic process"/>
    <property type="evidence" value="ECO:0007669"/>
    <property type="project" value="TreeGrafter"/>
</dbReference>
<dbReference type="FunFam" id="3.40.50.720:FF:000045">
    <property type="entry name" value="1-deoxy-D-xylulose 5-phosphate reductoisomerase"/>
    <property type="match status" value="1"/>
</dbReference>
<dbReference type="Gene3D" id="1.10.1740.10">
    <property type="match status" value="1"/>
</dbReference>
<dbReference type="Gene3D" id="3.40.50.720">
    <property type="entry name" value="NAD(P)-binding Rossmann-like Domain"/>
    <property type="match status" value="1"/>
</dbReference>
<dbReference type="HAMAP" id="MF_00183">
    <property type="entry name" value="DXP_reductoisom"/>
    <property type="match status" value="1"/>
</dbReference>
<dbReference type="InterPro" id="IPR003821">
    <property type="entry name" value="DXP_reductoisomerase"/>
</dbReference>
<dbReference type="InterPro" id="IPR013644">
    <property type="entry name" value="DXP_reductoisomerase_C"/>
</dbReference>
<dbReference type="InterPro" id="IPR013512">
    <property type="entry name" value="DXP_reductoisomerase_N"/>
</dbReference>
<dbReference type="InterPro" id="IPR026877">
    <property type="entry name" value="DXPR_C"/>
</dbReference>
<dbReference type="InterPro" id="IPR036169">
    <property type="entry name" value="DXPR_C_sf"/>
</dbReference>
<dbReference type="InterPro" id="IPR036291">
    <property type="entry name" value="NAD(P)-bd_dom_sf"/>
</dbReference>
<dbReference type="NCBIfam" id="TIGR00243">
    <property type="entry name" value="Dxr"/>
    <property type="match status" value="1"/>
</dbReference>
<dbReference type="NCBIfam" id="NF009114">
    <property type="entry name" value="PRK12464.1"/>
    <property type="match status" value="1"/>
</dbReference>
<dbReference type="PANTHER" id="PTHR30525">
    <property type="entry name" value="1-DEOXY-D-XYLULOSE 5-PHOSPHATE REDUCTOISOMERASE"/>
    <property type="match status" value="1"/>
</dbReference>
<dbReference type="PANTHER" id="PTHR30525:SF0">
    <property type="entry name" value="1-DEOXY-D-XYLULOSE 5-PHOSPHATE REDUCTOISOMERASE, CHLOROPLASTIC"/>
    <property type="match status" value="1"/>
</dbReference>
<dbReference type="Pfam" id="PF08436">
    <property type="entry name" value="DXP_redisom_C"/>
    <property type="match status" value="1"/>
</dbReference>
<dbReference type="Pfam" id="PF02670">
    <property type="entry name" value="DXP_reductoisom"/>
    <property type="match status" value="1"/>
</dbReference>
<dbReference type="Pfam" id="PF13288">
    <property type="entry name" value="DXPR_C"/>
    <property type="match status" value="1"/>
</dbReference>
<dbReference type="PIRSF" id="PIRSF006205">
    <property type="entry name" value="Dxp_reductismrs"/>
    <property type="match status" value="1"/>
</dbReference>
<dbReference type="SUPFAM" id="SSF69055">
    <property type="entry name" value="1-deoxy-D-xylulose-5-phosphate reductoisomerase, C-terminal domain"/>
    <property type="match status" value="1"/>
</dbReference>
<dbReference type="SUPFAM" id="SSF55347">
    <property type="entry name" value="Glyceraldehyde-3-phosphate dehydrogenase-like, C-terminal domain"/>
    <property type="match status" value="1"/>
</dbReference>
<dbReference type="SUPFAM" id="SSF51735">
    <property type="entry name" value="NAD(P)-binding Rossmann-fold domains"/>
    <property type="match status" value="1"/>
</dbReference>
<evidence type="ECO:0000255" key="1">
    <source>
        <dbReference type="HAMAP-Rule" id="MF_00183"/>
    </source>
</evidence>
<protein>
    <recommendedName>
        <fullName evidence="1">1-deoxy-D-xylulose 5-phosphate reductoisomerase</fullName>
        <shortName evidence="1">DXP reductoisomerase</shortName>
        <ecNumber evidence="1">1.1.1.267</ecNumber>
    </recommendedName>
    <alternativeName>
        <fullName evidence="1">1-deoxyxylulose-5-phosphate reductoisomerase</fullName>
    </alternativeName>
    <alternativeName>
        <fullName evidence="1">2-C-methyl-D-erythritol 4-phosphate synthase</fullName>
    </alternativeName>
</protein>
<comment type="function">
    <text evidence="1">Catalyzes the NADPH-dependent rearrangement and reduction of 1-deoxy-D-xylulose-5-phosphate (DXP) to 2-C-methyl-D-erythritol 4-phosphate (MEP).</text>
</comment>
<comment type="catalytic activity">
    <reaction evidence="1">
        <text>2-C-methyl-D-erythritol 4-phosphate + NADP(+) = 1-deoxy-D-xylulose 5-phosphate + NADPH + H(+)</text>
        <dbReference type="Rhea" id="RHEA:13717"/>
        <dbReference type="ChEBI" id="CHEBI:15378"/>
        <dbReference type="ChEBI" id="CHEBI:57783"/>
        <dbReference type="ChEBI" id="CHEBI:57792"/>
        <dbReference type="ChEBI" id="CHEBI:58262"/>
        <dbReference type="ChEBI" id="CHEBI:58349"/>
        <dbReference type="EC" id="1.1.1.267"/>
    </reaction>
    <physiologicalReaction direction="right-to-left" evidence="1">
        <dbReference type="Rhea" id="RHEA:13719"/>
    </physiologicalReaction>
</comment>
<comment type="cofactor">
    <cofactor evidence="1">
        <name>Mg(2+)</name>
        <dbReference type="ChEBI" id="CHEBI:18420"/>
    </cofactor>
    <cofactor evidence="1">
        <name>Mn(2+)</name>
        <dbReference type="ChEBI" id="CHEBI:29035"/>
    </cofactor>
</comment>
<comment type="pathway">
    <text evidence="1">Isoprenoid biosynthesis; isopentenyl diphosphate biosynthesis via DXP pathway; isopentenyl diphosphate from 1-deoxy-D-xylulose 5-phosphate: step 1/6.</text>
</comment>
<comment type="similarity">
    <text evidence="1">Belongs to the DXR family.</text>
</comment>
<sequence>MKAISVLGSTGSIGTQTLQIAEEFPEQFKIVALTAGKNLDLVIKQIETHQPEVVSLADESLLSELSSRINSLTENKKIVKKPLLMAGAEGLNTAAAWGSADLVVTGIVGCAGLLPTLAAIEAGKDLALANKETLIAAGPVVIPALKKSGSRLLPADSEHSAIFQCLQGTPWADNARLSTGMPTPGFKSIQLTASGGAFRDWKAEDLVKATVEDATSHPNWSMGKKITVDSATLMNKGLEVIEAHYLFGLSYDQIEIIIHPQSIIHSMVELDDSSVLAQLGWPDMKLPILYCLSWPSRLKTPWPRLKLTQIGNLTFKEPDTKKYPCMELAYSAGKSGGTMPAVLNAANEKAVELFLEERFKFIDIPKVIEAICEKHKCDLNLNPSLSEILEIDNWAREEVLDYSEKNITKMQF</sequence>
<reference key="1">
    <citation type="journal article" date="2007" name="PLoS Genet.">
        <title>Patterns and implications of gene gain and loss in the evolution of Prochlorococcus.</title>
        <authorList>
            <person name="Kettler G.C."/>
            <person name="Martiny A.C."/>
            <person name="Huang K."/>
            <person name="Zucker J."/>
            <person name="Coleman M.L."/>
            <person name="Rodrigue S."/>
            <person name="Chen F."/>
            <person name="Lapidus A."/>
            <person name="Ferriera S."/>
            <person name="Johnson J."/>
            <person name="Steglich C."/>
            <person name="Church G.M."/>
            <person name="Richardson P."/>
            <person name="Chisholm S.W."/>
        </authorList>
    </citation>
    <scope>NUCLEOTIDE SEQUENCE [LARGE SCALE GENOMIC DNA]</scope>
    <source>
        <strain>NATL2A</strain>
    </source>
</reference>
<accession>Q46JT6</accession>
<proteinExistence type="inferred from homology"/>